<accession>Q8TX60</accession>
<feature type="chain" id="PRO_0000138127" description="Formylmethanofuran--tetrahydromethanopterin formyltransferase-like protein">
    <location>
        <begin position="1"/>
        <end position="300"/>
    </location>
</feature>
<keyword id="KW-1185">Reference proteome</keyword>
<keyword id="KW-0808">Transferase</keyword>
<organism>
    <name type="scientific">Methanopyrus kandleri (strain AV19 / DSM 6324 / JCM 9639 / NBRC 100938)</name>
    <dbReference type="NCBI Taxonomy" id="190192"/>
    <lineage>
        <taxon>Archaea</taxon>
        <taxon>Methanobacteriati</taxon>
        <taxon>Methanobacteriota</taxon>
        <taxon>Methanomada group</taxon>
        <taxon>Methanopyri</taxon>
        <taxon>Methanopyrales</taxon>
        <taxon>Methanopyraceae</taxon>
        <taxon>Methanopyrus</taxon>
    </lineage>
</organism>
<reference key="1">
    <citation type="journal article" date="2002" name="Proc. Natl. Acad. Sci. U.S.A.">
        <title>The complete genome of hyperthermophile Methanopyrus kandleri AV19 and monophyly of archaeal methanogens.</title>
        <authorList>
            <person name="Slesarev A.I."/>
            <person name="Mezhevaya K.V."/>
            <person name="Makarova K.S."/>
            <person name="Polushin N.N."/>
            <person name="Shcherbinina O.V."/>
            <person name="Shakhova V.V."/>
            <person name="Belova G.I."/>
            <person name="Aravind L."/>
            <person name="Natale D.A."/>
            <person name="Rogozin I.B."/>
            <person name="Tatusov R.L."/>
            <person name="Wolf Y.I."/>
            <person name="Stetter K.O."/>
            <person name="Malykh A.G."/>
            <person name="Koonin E.V."/>
            <person name="Kozyavkin S.A."/>
        </authorList>
    </citation>
    <scope>NUCLEOTIDE SEQUENCE [LARGE SCALE GENOMIC DNA]</scope>
    <source>
        <strain>AV19 / DSM 6324 / JCM 9639 / NBRC 100938</strain>
    </source>
</reference>
<gene>
    <name type="ordered locus">MK0816</name>
</gene>
<dbReference type="EMBL" id="AE009439">
    <property type="protein sequence ID" value="AAM02029.1"/>
    <property type="molecule type" value="Genomic_DNA"/>
</dbReference>
<dbReference type="RefSeq" id="WP_011019184.1">
    <property type="nucleotide sequence ID" value="NC_003551.1"/>
</dbReference>
<dbReference type="SMR" id="Q8TX60"/>
<dbReference type="STRING" id="190192.MK0816"/>
<dbReference type="PaxDb" id="190192-MK0816"/>
<dbReference type="EnsemblBacteria" id="AAM02029">
    <property type="protein sequence ID" value="AAM02029"/>
    <property type="gene ID" value="MK0816"/>
</dbReference>
<dbReference type="GeneID" id="1476917"/>
<dbReference type="KEGG" id="mka:MK0816"/>
<dbReference type="PATRIC" id="fig|190192.8.peg.858"/>
<dbReference type="HOGENOM" id="CLU_081314_0_0_2"/>
<dbReference type="InParanoid" id="Q8TX60"/>
<dbReference type="OrthoDB" id="73512at2157"/>
<dbReference type="BRENDA" id="2.3.1.101">
    <property type="organism ID" value="3274"/>
</dbReference>
<dbReference type="Proteomes" id="UP000001826">
    <property type="component" value="Chromosome"/>
</dbReference>
<dbReference type="GO" id="GO:0030270">
    <property type="term" value="F:formylmethanofuran-tetrahydromethanopterin N-formyltransferase activity"/>
    <property type="evidence" value="ECO:0007669"/>
    <property type="project" value="InterPro"/>
</dbReference>
<dbReference type="GO" id="GO:0006730">
    <property type="term" value="P:one-carbon metabolic process"/>
    <property type="evidence" value="ECO:0007669"/>
    <property type="project" value="InterPro"/>
</dbReference>
<dbReference type="Gene3D" id="3.30.70.520">
    <property type="match status" value="2"/>
</dbReference>
<dbReference type="InterPro" id="IPR014053">
    <property type="entry name" value="ForMFR_H4MPT_ForTrfase"/>
</dbReference>
<dbReference type="InterPro" id="IPR002770">
    <property type="entry name" value="ForMFR_H4MPT_ForTrfase_C"/>
</dbReference>
<dbReference type="InterPro" id="IPR023447">
    <property type="entry name" value="ForMFR_H4MPT_ForTrfase_fd-like"/>
</dbReference>
<dbReference type="InterPro" id="IPR022667">
    <property type="entry name" value="ForMFR_H4MPT_ForTrfase_N"/>
</dbReference>
<dbReference type="NCBIfam" id="NF002554">
    <property type="entry name" value="PRK02114.1"/>
    <property type="match status" value="1"/>
</dbReference>
<dbReference type="Pfam" id="PF01913">
    <property type="entry name" value="FTR"/>
    <property type="match status" value="1"/>
</dbReference>
<dbReference type="Pfam" id="PF02741">
    <property type="entry name" value="FTR_C"/>
    <property type="match status" value="1"/>
</dbReference>
<dbReference type="PIRSF" id="PIRSF006414">
    <property type="entry name" value="Ftr_formyl_trnsf"/>
    <property type="match status" value="1"/>
</dbReference>
<dbReference type="SUPFAM" id="SSF55112">
    <property type="entry name" value="Formylmethanofuran:tetrahydromethanopterin formyltransferase"/>
    <property type="match status" value="2"/>
</dbReference>
<proteinExistence type="inferred from homology"/>
<protein>
    <recommendedName>
        <fullName>Formylmethanofuran--tetrahydromethanopterin formyltransferase-like protein</fullName>
    </recommendedName>
</protein>
<sequence length="300" mass="32966">MVEINGVPVEDTFCEAFKGLYARFIVTAADERPLREAAENVAALPATVFGESEAGVERWLDPEETPDGRPGFVAQMWVEYGDDAVKKLEHELGKRIRQGVLVRPTTRVFDACEDPDGYIDTERPIGRCADGYEYTDVRFDREMVHVPIMMGEFLIERRLGYAEGVAGGLVWLFCEDVDAALEAGYRAVEALRDVEGVITPFNVCAAGSKPETIYPDIGPTTNHPYCPTLRDRILDSKVPEGVEAIPEIVINGVSLDVVKRAIGIAIEAATEVDGVVKVSAGNFGGKLGDYRIPLRECIRE</sequence>
<evidence type="ECO:0000305" key="1"/>
<comment type="similarity">
    <text evidence="1">Belongs to the FTR family.</text>
</comment>
<name>FTRL_METKA</name>